<proteinExistence type="inferred from homology"/>
<keyword id="KW-0963">Cytoplasm</keyword>
<keyword id="KW-0378">Hydrolase</keyword>
<keyword id="KW-0694">RNA-binding</keyword>
<keyword id="KW-0820">tRNA-binding</keyword>
<feature type="chain" id="PRO_1000092930" description="Peptidyl-tRNA hydrolase">
    <location>
        <begin position="1"/>
        <end position="189"/>
    </location>
</feature>
<feature type="active site" description="Proton acceptor" evidence="1">
    <location>
        <position position="19"/>
    </location>
</feature>
<feature type="binding site" evidence="1">
    <location>
        <position position="14"/>
    </location>
    <ligand>
        <name>tRNA</name>
        <dbReference type="ChEBI" id="CHEBI:17843"/>
    </ligand>
</feature>
<feature type="binding site" evidence="1">
    <location>
        <position position="64"/>
    </location>
    <ligand>
        <name>tRNA</name>
        <dbReference type="ChEBI" id="CHEBI:17843"/>
    </ligand>
</feature>
<feature type="binding site" evidence="1">
    <location>
        <position position="66"/>
    </location>
    <ligand>
        <name>tRNA</name>
        <dbReference type="ChEBI" id="CHEBI:17843"/>
    </ligand>
</feature>
<feature type="binding site" evidence="1">
    <location>
        <position position="112"/>
    </location>
    <ligand>
        <name>tRNA</name>
        <dbReference type="ChEBI" id="CHEBI:17843"/>
    </ligand>
</feature>
<feature type="site" description="Discriminates between blocked and unblocked aminoacyl-tRNA" evidence="1">
    <location>
        <position position="9"/>
    </location>
</feature>
<feature type="site" description="Stabilizes the basic form of H active site to accept a proton" evidence="1">
    <location>
        <position position="91"/>
    </location>
</feature>
<protein>
    <recommendedName>
        <fullName evidence="1">Peptidyl-tRNA hydrolase</fullName>
        <shortName evidence="1">Pth</shortName>
        <ecNumber evidence="1">3.1.1.29</ecNumber>
    </recommendedName>
</protein>
<comment type="function">
    <text evidence="1">Hydrolyzes ribosome-free peptidyl-tRNAs (with 1 or more amino acids incorporated), which drop off the ribosome during protein synthesis, or as a result of ribosome stalling.</text>
</comment>
<comment type="function">
    <text evidence="1">Catalyzes the release of premature peptidyl moieties from peptidyl-tRNA molecules trapped in stalled 50S ribosomal subunits, and thus maintains levels of free tRNAs and 50S ribosomes.</text>
</comment>
<comment type="catalytic activity">
    <reaction evidence="1">
        <text>an N-acyl-L-alpha-aminoacyl-tRNA + H2O = an N-acyl-L-amino acid + a tRNA + H(+)</text>
        <dbReference type="Rhea" id="RHEA:54448"/>
        <dbReference type="Rhea" id="RHEA-COMP:10123"/>
        <dbReference type="Rhea" id="RHEA-COMP:13883"/>
        <dbReference type="ChEBI" id="CHEBI:15377"/>
        <dbReference type="ChEBI" id="CHEBI:15378"/>
        <dbReference type="ChEBI" id="CHEBI:59874"/>
        <dbReference type="ChEBI" id="CHEBI:78442"/>
        <dbReference type="ChEBI" id="CHEBI:138191"/>
        <dbReference type="EC" id="3.1.1.29"/>
    </reaction>
</comment>
<comment type="subunit">
    <text evidence="1">Monomer.</text>
</comment>
<comment type="subcellular location">
    <subcellularLocation>
        <location evidence="1">Cytoplasm</location>
    </subcellularLocation>
</comment>
<comment type="similarity">
    <text evidence="1">Belongs to the PTH family.</text>
</comment>
<evidence type="ECO:0000255" key="1">
    <source>
        <dbReference type="HAMAP-Rule" id="MF_00083"/>
    </source>
</evidence>
<name>PTH_CLOBM</name>
<accession>B1KTE2</accession>
<gene>
    <name evidence="1" type="primary">pth</name>
    <name type="ordered locus">CLK_3009</name>
</gene>
<sequence length="189" mass="21053">MYLVVGLGNIGKEYKKTRHNIGFDVVDIVAEKYNIEINRQKFKGSYGEGRIGNEKIILLKPSTYMNLSGESVIEAANFYKIDKENIIVIYDDMSIDIGKLRVRGKGSAGGHNGIKNIIQHLNSDIFPRVRVGIGQPDENVVNYVLGKFSKDQREVIEKVLAMSAKACISIVEDGVTEAMNKYNGVKIEV</sequence>
<reference key="1">
    <citation type="journal article" date="2007" name="PLoS ONE">
        <title>Analysis of the neurotoxin complex genes in Clostridium botulinum A1-A4 and B1 strains: BoNT/A3, /Ba4 and /B1 clusters are located within plasmids.</title>
        <authorList>
            <person name="Smith T.J."/>
            <person name="Hill K.K."/>
            <person name="Foley B.T."/>
            <person name="Detter J.C."/>
            <person name="Munk A.C."/>
            <person name="Bruce D.C."/>
            <person name="Doggett N.A."/>
            <person name="Smith L.A."/>
            <person name="Marks J.D."/>
            <person name="Xie G."/>
            <person name="Brettin T.S."/>
        </authorList>
    </citation>
    <scope>NUCLEOTIDE SEQUENCE [LARGE SCALE GENOMIC DNA]</scope>
    <source>
        <strain>Loch Maree / Type A3</strain>
    </source>
</reference>
<dbReference type="EC" id="3.1.1.29" evidence="1"/>
<dbReference type="EMBL" id="CP000962">
    <property type="protein sequence ID" value="ACA54471.1"/>
    <property type="molecule type" value="Genomic_DNA"/>
</dbReference>
<dbReference type="RefSeq" id="WP_012342570.1">
    <property type="nucleotide sequence ID" value="NC_010520.1"/>
</dbReference>
<dbReference type="SMR" id="B1KTE2"/>
<dbReference type="KEGG" id="cbl:CLK_3009"/>
<dbReference type="HOGENOM" id="CLU_062456_4_1_9"/>
<dbReference type="GO" id="GO:0005737">
    <property type="term" value="C:cytoplasm"/>
    <property type="evidence" value="ECO:0007669"/>
    <property type="project" value="UniProtKB-SubCell"/>
</dbReference>
<dbReference type="GO" id="GO:0004045">
    <property type="term" value="F:peptidyl-tRNA hydrolase activity"/>
    <property type="evidence" value="ECO:0007669"/>
    <property type="project" value="UniProtKB-UniRule"/>
</dbReference>
<dbReference type="GO" id="GO:0000049">
    <property type="term" value="F:tRNA binding"/>
    <property type="evidence" value="ECO:0007669"/>
    <property type="project" value="UniProtKB-UniRule"/>
</dbReference>
<dbReference type="GO" id="GO:0006515">
    <property type="term" value="P:protein quality control for misfolded or incompletely synthesized proteins"/>
    <property type="evidence" value="ECO:0007669"/>
    <property type="project" value="UniProtKB-UniRule"/>
</dbReference>
<dbReference type="GO" id="GO:0072344">
    <property type="term" value="P:rescue of stalled ribosome"/>
    <property type="evidence" value="ECO:0007669"/>
    <property type="project" value="UniProtKB-UniRule"/>
</dbReference>
<dbReference type="CDD" id="cd00462">
    <property type="entry name" value="PTH"/>
    <property type="match status" value="1"/>
</dbReference>
<dbReference type="FunFam" id="3.40.50.1470:FF:000001">
    <property type="entry name" value="Peptidyl-tRNA hydrolase"/>
    <property type="match status" value="1"/>
</dbReference>
<dbReference type="Gene3D" id="3.40.50.1470">
    <property type="entry name" value="Peptidyl-tRNA hydrolase"/>
    <property type="match status" value="1"/>
</dbReference>
<dbReference type="HAMAP" id="MF_00083">
    <property type="entry name" value="Pept_tRNA_hydro_bact"/>
    <property type="match status" value="1"/>
</dbReference>
<dbReference type="InterPro" id="IPR001328">
    <property type="entry name" value="Pept_tRNA_hydro"/>
</dbReference>
<dbReference type="InterPro" id="IPR018171">
    <property type="entry name" value="Pept_tRNA_hydro_CS"/>
</dbReference>
<dbReference type="InterPro" id="IPR036416">
    <property type="entry name" value="Pept_tRNA_hydro_sf"/>
</dbReference>
<dbReference type="NCBIfam" id="TIGR00447">
    <property type="entry name" value="pth"/>
    <property type="match status" value="1"/>
</dbReference>
<dbReference type="PANTHER" id="PTHR17224">
    <property type="entry name" value="PEPTIDYL-TRNA HYDROLASE"/>
    <property type="match status" value="1"/>
</dbReference>
<dbReference type="PANTHER" id="PTHR17224:SF1">
    <property type="entry name" value="PEPTIDYL-TRNA HYDROLASE"/>
    <property type="match status" value="1"/>
</dbReference>
<dbReference type="Pfam" id="PF01195">
    <property type="entry name" value="Pept_tRNA_hydro"/>
    <property type="match status" value="1"/>
</dbReference>
<dbReference type="SUPFAM" id="SSF53178">
    <property type="entry name" value="Peptidyl-tRNA hydrolase-like"/>
    <property type="match status" value="1"/>
</dbReference>
<dbReference type="PROSITE" id="PS01195">
    <property type="entry name" value="PEPT_TRNA_HYDROL_1"/>
    <property type="match status" value="1"/>
</dbReference>
<dbReference type="PROSITE" id="PS01196">
    <property type="entry name" value="PEPT_TRNA_HYDROL_2"/>
    <property type="match status" value="1"/>
</dbReference>
<organism>
    <name type="scientific">Clostridium botulinum (strain Loch Maree / Type A3)</name>
    <dbReference type="NCBI Taxonomy" id="498214"/>
    <lineage>
        <taxon>Bacteria</taxon>
        <taxon>Bacillati</taxon>
        <taxon>Bacillota</taxon>
        <taxon>Clostridia</taxon>
        <taxon>Eubacteriales</taxon>
        <taxon>Clostridiaceae</taxon>
        <taxon>Clostridium</taxon>
    </lineage>
</organism>